<dbReference type="EC" id="5.2.1.8" evidence="1"/>
<dbReference type="EMBL" id="CP000479">
    <property type="protein sequence ID" value="ABK65975.1"/>
    <property type="molecule type" value="Genomic_DNA"/>
</dbReference>
<dbReference type="RefSeq" id="WP_003875847.1">
    <property type="nucleotide sequence ID" value="NC_008595.1"/>
</dbReference>
<dbReference type="SMR" id="A0QDF1"/>
<dbReference type="GeneID" id="75269488"/>
<dbReference type="KEGG" id="mav:MAV_1712"/>
<dbReference type="HOGENOM" id="CLU_033058_3_0_11"/>
<dbReference type="Proteomes" id="UP000001574">
    <property type="component" value="Chromosome"/>
</dbReference>
<dbReference type="GO" id="GO:0005737">
    <property type="term" value="C:cytoplasm"/>
    <property type="evidence" value="ECO:0007669"/>
    <property type="project" value="UniProtKB-SubCell"/>
</dbReference>
<dbReference type="GO" id="GO:0003755">
    <property type="term" value="F:peptidyl-prolyl cis-trans isomerase activity"/>
    <property type="evidence" value="ECO:0007669"/>
    <property type="project" value="UniProtKB-UniRule"/>
</dbReference>
<dbReference type="GO" id="GO:0044183">
    <property type="term" value="F:protein folding chaperone"/>
    <property type="evidence" value="ECO:0007669"/>
    <property type="project" value="TreeGrafter"/>
</dbReference>
<dbReference type="GO" id="GO:0043022">
    <property type="term" value="F:ribosome binding"/>
    <property type="evidence" value="ECO:0007669"/>
    <property type="project" value="TreeGrafter"/>
</dbReference>
<dbReference type="GO" id="GO:0051083">
    <property type="term" value="P:'de novo' cotranslational protein folding"/>
    <property type="evidence" value="ECO:0007669"/>
    <property type="project" value="TreeGrafter"/>
</dbReference>
<dbReference type="GO" id="GO:0051301">
    <property type="term" value="P:cell division"/>
    <property type="evidence" value="ECO:0007669"/>
    <property type="project" value="UniProtKB-KW"/>
</dbReference>
<dbReference type="GO" id="GO:0061077">
    <property type="term" value="P:chaperone-mediated protein folding"/>
    <property type="evidence" value="ECO:0007669"/>
    <property type="project" value="TreeGrafter"/>
</dbReference>
<dbReference type="GO" id="GO:0015031">
    <property type="term" value="P:protein transport"/>
    <property type="evidence" value="ECO:0007669"/>
    <property type="project" value="UniProtKB-UniRule"/>
</dbReference>
<dbReference type="GO" id="GO:0043335">
    <property type="term" value="P:protein unfolding"/>
    <property type="evidence" value="ECO:0007669"/>
    <property type="project" value="TreeGrafter"/>
</dbReference>
<dbReference type="Gene3D" id="3.10.50.40">
    <property type="match status" value="1"/>
</dbReference>
<dbReference type="Gene3D" id="3.30.70.1050">
    <property type="entry name" value="Trigger factor ribosome-binding domain"/>
    <property type="match status" value="1"/>
</dbReference>
<dbReference type="Gene3D" id="1.10.3120.10">
    <property type="entry name" value="Trigger factor, C-terminal domain"/>
    <property type="match status" value="1"/>
</dbReference>
<dbReference type="HAMAP" id="MF_00303">
    <property type="entry name" value="Trigger_factor_Tig"/>
    <property type="match status" value="1"/>
</dbReference>
<dbReference type="InterPro" id="IPR046357">
    <property type="entry name" value="PPIase_dom_sf"/>
</dbReference>
<dbReference type="InterPro" id="IPR001179">
    <property type="entry name" value="PPIase_FKBP_dom"/>
</dbReference>
<dbReference type="InterPro" id="IPR005215">
    <property type="entry name" value="Trig_fac"/>
</dbReference>
<dbReference type="InterPro" id="IPR008880">
    <property type="entry name" value="Trigger_fac_C"/>
</dbReference>
<dbReference type="InterPro" id="IPR037041">
    <property type="entry name" value="Trigger_fac_C_sf"/>
</dbReference>
<dbReference type="InterPro" id="IPR008881">
    <property type="entry name" value="Trigger_fac_ribosome-bd_bac"/>
</dbReference>
<dbReference type="InterPro" id="IPR036611">
    <property type="entry name" value="Trigger_fac_ribosome-bd_sf"/>
</dbReference>
<dbReference type="InterPro" id="IPR027304">
    <property type="entry name" value="Trigger_fact/SurA_dom_sf"/>
</dbReference>
<dbReference type="NCBIfam" id="TIGR00115">
    <property type="entry name" value="tig"/>
    <property type="match status" value="1"/>
</dbReference>
<dbReference type="PANTHER" id="PTHR30560">
    <property type="entry name" value="TRIGGER FACTOR CHAPERONE AND PEPTIDYL-PROLYL CIS/TRANS ISOMERASE"/>
    <property type="match status" value="1"/>
</dbReference>
<dbReference type="PANTHER" id="PTHR30560:SF3">
    <property type="entry name" value="TRIGGER FACTOR-LIKE PROTEIN TIG, CHLOROPLASTIC"/>
    <property type="match status" value="1"/>
</dbReference>
<dbReference type="Pfam" id="PF00254">
    <property type="entry name" value="FKBP_C"/>
    <property type="match status" value="1"/>
</dbReference>
<dbReference type="Pfam" id="PF05698">
    <property type="entry name" value="Trigger_C"/>
    <property type="match status" value="1"/>
</dbReference>
<dbReference type="Pfam" id="PF05697">
    <property type="entry name" value="Trigger_N"/>
    <property type="match status" value="1"/>
</dbReference>
<dbReference type="PIRSF" id="PIRSF003095">
    <property type="entry name" value="Trigger_factor"/>
    <property type="match status" value="1"/>
</dbReference>
<dbReference type="SUPFAM" id="SSF54534">
    <property type="entry name" value="FKBP-like"/>
    <property type="match status" value="1"/>
</dbReference>
<dbReference type="SUPFAM" id="SSF109998">
    <property type="entry name" value="Triger factor/SurA peptide-binding domain-like"/>
    <property type="match status" value="1"/>
</dbReference>
<dbReference type="SUPFAM" id="SSF102735">
    <property type="entry name" value="Trigger factor ribosome-binding domain"/>
    <property type="match status" value="1"/>
</dbReference>
<dbReference type="PROSITE" id="PS50059">
    <property type="entry name" value="FKBP_PPIASE"/>
    <property type="match status" value="1"/>
</dbReference>
<feature type="chain" id="PRO_1000022709" description="Trigger factor">
    <location>
        <begin position="1"/>
        <end position="464"/>
    </location>
</feature>
<feature type="domain" description="PPIase FKBP-type" evidence="1">
    <location>
        <begin position="162"/>
        <end position="243"/>
    </location>
</feature>
<feature type="region of interest" description="Disordered" evidence="2">
    <location>
        <begin position="431"/>
        <end position="464"/>
    </location>
</feature>
<feature type="compositionally biased region" description="Acidic residues" evidence="2">
    <location>
        <begin position="446"/>
        <end position="455"/>
    </location>
</feature>
<organism>
    <name type="scientific">Mycobacterium avium (strain 104)</name>
    <dbReference type="NCBI Taxonomy" id="243243"/>
    <lineage>
        <taxon>Bacteria</taxon>
        <taxon>Bacillati</taxon>
        <taxon>Actinomycetota</taxon>
        <taxon>Actinomycetes</taxon>
        <taxon>Mycobacteriales</taxon>
        <taxon>Mycobacteriaceae</taxon>
        <taxon>Mycobacterium</taxon>
        <taxon>Mycobacterium avium complex (MAC)</taxon>
    </lineage>
</organism>
<proteinExistence type="inferred from homology"/>
<sequence length="464" mass="50650">MKSTVEQLSPTRVRINVEVPFAELEPDFQRAYKELAKQVRLPGFRPGKAPAKLLEARFGREAMLDQVVTEALPARYGQAVAESEVHPLGQPEIEVTKKEYGQELAFTAEVDVRPELNLPDPGALKISVDPIEVTDEDVDAELQSLRARFGTLTGVERPVAEGDFVSIDLSATIDGQEVPGATAQGLSHEVGSGRLIEGLDEALIGMSVDESREFTTKLVSGEHAGQDAQVTVTVKSVKERELPEPDDEFAQLASEFDTIDELRANLREQVGRVKRAQQAERIRDAAIDTLLEQVDIPLPEAIVKAQVDSALHGALHSLNHDESKLEEVLAQQGKSREEFENETRTAAETDVKKQLLLDALADKLQVQVGQEDLTERLVATSRQYGIEPQQLLAYLQENNQLPAMFADVRRALAIAEVIRAATVTDTAGNTIDTSEFFGKRPSGDGAADEDADQADESTTADAGE</sequence>
<gene>
    <name evidence="1" type="primary">tig</name>
    <name type="ordered locus">MAV_1712</name>
</gene>
<keyword id="KW-0131">Cell cycle</keyword>
<keyword id="KW-0132">Cell division</keyword>
<keyword id="KW-0143">Chaperone</keyword>
<keyword id="KW-0963">Cytoplasm</keyword>
<keyword id="KW-0413">Isomerase</keyword>
<keyword id="KW-0697">Rotamase</keyword>
<accession>A0QDF1</accession>
<evidence type="ECO:0000255" key="1">
    <source>
        <dbReference type="HAMAP-Rule" id="MF_00303"/>
    </source>
</evidence>
<evidence type="ECO:0000256" key="2">
    <source>
        <dbReference type="SAM" id="MobiDB-lite"/>
    </source>
</evidence>
<protein>
    <recommendedName>
        <fullName evidence="1">Trigger factor</fullName>
        <shortName evidence="1">TF</shortName>
        <ecNumber evidence="1">5.2.1.8</ecNumber>
    </recommendedName>
    <alternativeName>
        <fullName evidence="1">PPIase</fullName>
    </alternativeName>
</protein>
<reference key="1">
    <citation type="submission" date="2006-10" db="EMBL/GenBank/DDBJ databases">
        <authorList>
            <person name="Fleischmann R.D."/>
            <person name="Dodson R.J."/>
            <person name="Haft D.H."/>
            <person name="Merkel J.S."/>
            <person name="Nelson W.C."/>
            <person name="Fraser C.M."/>
        </authorList>
    </citation>
    <scope>NUCLEOTIDE SEQUENCE [LARGE SCALE GENOMIC DNA]</scope>
    <source>
        <strain>104</strain>
    </source>
</reference>
<comment type="function">
    <text evidence="1">Involved in protein export. Acts as a chaperone by maintaining the newly synthesized protein in an open conformation. Functions as a peptidyl-prolyl cis-trans isomerase.</text>
</comment>
<comment type="catalytic activity">
    <reaction evidence="1">
        <text>[protein]-peptidylproline (omega=180) = [protein]-peptidylproline (omega=0)</text>
        <dbReference type="Rhea" id="RHEA:16237"/>
        <dbReference type="Rhea" id="RHEA-COMP:10747"/>
        <dbReference type="Rhea" id="RHEA-COMP:10748"/>
        <dbReference type="ChEBI" id="CHEBI:83833"/>
        <dbReference type="ChEBI" id="CHEBI:83834"/>
        <dbReference type="EC" id="5.2.1.8"/>
    </reaction>
</comment>
<comment type="subcellular location">
    <subcellularLocation>
        <location>Cytoplasm</location>
    </subcellularLocation>
    <text evidence="1">About half TF is bound to the ribosome near the polypeptide exit tunnel while the other half is free in the cytoplasm.</text>
</comment>
<comment type="domain">
    <text evidence="1">Consists of 3 domains; the N-terminus binds the ribosome, the middle domain has PPIase activity, while the C-terminus has intrinsic chaperone activity on its own.</text>
</comment>
<comment type="similarity">
    <text evidence="1">Belongs to the FKBP-type PPIase family. Tig subfamily.</text>
</comment>
<name>TIG_MYCA1</name>